<gene>
    <name type="primary">retsatl</name>
    <name evidence="3" type="synonym">retsatb</name>
</gene>
<sequence>MWWILLFLEWFVDWARGTFWYLFGRRSGLCKGTISPQGPLVVDQEKKDKVLQKEYASNEVPDNLDVIVIGSGIGGLTAAAVLARLGKKVLVLEQDKQAGGLCKTFTEKGFEFDCGFYYVGQLHENSFLKIALDLITDGQVHFAEQGSHVETVVIGKGPECKEYTIYNGKKQMEAHLKKQFPNDAKAVEEFFKIMKICSEKVRLLCMLKMVPLWFARFILRTGIADFISPILKYSRTSTSEVVKSLTSNQDLLTVFSKTFCGVPPKNSSCMIDALLLHHSKRGVYYPQGGASEIPYHIIQVLEKHGGKVLVNAPVSRVLVNEQQNAYGVAVKTGDEDIEIKASVVVSNAGVFTTFQKLLTPEIQADPQVQEYLKALKPGKGFFQVFAGFNATMEELGISSTDMRLYKGNNVDEMMEEYFASDKQDAPDNVPMMYLSFPSAKDPTSSTRFPGQSRMVIHTLVNPKWFEQWENVNEAERGEEYENYKMRFANHLFDWACVRFPQLKEKVALLHAVTPINMHGLGASYCSMSAEHNLERYQPLNIATIRCNTPVKNLYLSGQDIFTAGYSGALHGGFLCASTVMDRCLHIDLLLQQKKLKSKSVKKLE</sequence>
<evidence type="ECO:0000255" key="1"/>
<evidence type="ECO:0000269" key="2">
    <source>
    </source>
</evidence>
<evidence type="ECO:0000303" key="3">
    <source>
    </source>
</evidence>
<evidence type="ECO:0000305" key="4"/>
<evidence type="ECO:0000312" key="5">
    <source>
        <dbReference type="Proteomes" id="UP000000437"/>
    </source>
</evidence>
<protein>
    <recommendedName>
        <fullName evidence="4">Inactive all-trans-retinol 13,14-reductase</fullName>
    </recommendedName>
    <alternativeName>
        <fullName evidence="3">Inactive all-trans-13,14-dihydroretinol saturase B</fullName>
        <shortName evidence="3">RetSat B</shortName>
    </alternativeName>
    <alternativeName>
        <fullName>Retinol saturase (all-trans-retinol 13,14-reductase)-like protein</fullName>
    </alternativeName>
</protein>
<proteinExistence type="evidence at protein level"/>
<keyword id="KW-0274">FAD</keyword>
<keyword id="KW-0285">Flavoprotein</keyword>
<keyword id="KW-0520">NAD</keyword>
<keyword id="KW-0521">NADP</keyword>
<keyword id="KW-1185">Reference proteome</keyword>
<keyword id="KW-0732">Signal</keyword>
<dbReference type="EMBL" id="BX510317">
    <property type="status" value="NOT_ANNOTATED_CDS"/>
    <property type="molecule type" value="Genomic_DNA"/>
</dbReference>
<dbReference type="SMR" id="B0S6C5"/>
<dbReference type="FunCoup" id="B0S6C5">
    <property type="interactions" value="9"/>
</dbReference>
<dbReference type="STRING" id="7955.ENSDARP00000115830"/>
<dbReference type="PaxDb" id="7955-ENSDARP00000043898"/>
<dbReference type="PeptideAtlas" id="B0S6C5"/>
<dbReference type="Ensembl" id="ENSDART00000141434">
    <property type="protein sequence ID" value="ENSDARP00000115830"/>
    <property type="gene ID" value="ENSDARG00000034989"/>
</dbReference>
<dbReference type="HOGENOM" id="CLU_019722_1_0_1"/>
<dbReference type="InParanoid" id="B0S6C5"/>
<dbReference type="OMA" id="FLEWFVD"/>
<dbReference type="PhylomeDB" id="B0S6C5"/>
<dbReference type="Proteomes" id="UP000000437">
    <property type="component" value="Unplaced"/>
</dbReference>
<dbReference type="Bgee" id="ENSDARG00000034989">
    <property type="expression patterns" value="Expressed in bone element and 22 other cell types or tissues"/>
</dbReference>
<dbReference type="GO" id="GO:0016491">
    <property type="term" value="F:oxidoreductase activity"/>
    <property type="evidence" value="ECO:0007669"/>
    <property type="project" value="InterPro"/>
</dbReference>
<dbReference type="Gene3D" id="3.50.50.60">
    <property type="entry name" value="FAD/NAD(P)-binding domain"/>
    <property type="match status" value="2"/>
</dbReference>
<dbReference type="InterPro" id="IPR002937">
    <property type="entry name" value="Amino_oxidase"/>
</dbReference>
<dbReference type="InterPro" id="IPR036188">
    <property type="entry name" value="FAD/NAD-bd_sf"/>
</dbReference>
<dbReference type="InterPro" id="IPR052206">
    <property type="entry name" value="Retinol_saturase"/>
</dbReference>
<dbReference type="PANTHER" id="PTHR46091:SF2">
    <property type="entry name" value="AMINE OXIDASE DOMAIN-CONTAINING PROTEIN"/>
    <property type="match status" value="1"/>
</dbReference>
<dbReference type="PANTHER" id="PTHR46091">
    <property type="entry name" value="BLR7054 PROTEIN"/>
    <property type="match status" value="1"/>
</dbReference>
<dbReference type="Pfam" id="PF01593">
    <property type="entry name" value="Amino_oxidase"/>
    <property type="match status" value="1"/>
</dbReference>
<dbReference type="SUPFAM" id="SSF51905">
    <property type="entry name" value="FAD/NAD(P)-binding domain"/>
    <property type="match status" value="1"/>
</dbReference>
<comment type="developmental stage">
    <text evidence="2">Detected from the 6-somite stage onwards. Expressed in cells near the anterior part of the yolk sac at 48 hours post-fertilization (hpf). Expression refines to the intestine by 72 hpf.</text>
</comment>
<comment type="similarity">
    <text evidence="4">Belongs to the carotenoid/retinoid oxidoreductase family. CrtISO subfamily.</text>
</comment>
<comment type="caution">
    <text evidence="2">Has no detectable retinol saturase activity.</text>
</comment>
<feature type="signal peptide" evidence="1">
    <location>
        <begin position="1"/>
        <end position="17"/>
    </location>
</feature>
<feature type="chain" id="PRO_5002755333" description="Inactive all-trans-retinol 13,14-reductase" evidence="1">
    <location>
        <begin position="18"/>
        <end position="604"/>
    </location>
</feature>
<name>RTSTL_DANRE</name>
<accession>B0S6C5</accession>
<organism evidence="5">
    <name type="scientific">Danio rerio</name>
    <name type="common">Zebrafish</name>
    <name type="synonym">Brachydanio rerio</name>
    <dbReference type="NCBI Taxonomy" id="7955"/>
    <lineage>
        <taxon>Eukaryota</taxon>
        <taxon>Metazoa</taxon>
        <taxon>Chordata</taxon>
        <taxon>Craniata</taxon>
        <taxon>Vertebrata</taxon>
        <taxon>Euteleostomi</taxon>
        <taxon>Actinopterygii</taxon>
        <taxon>Neopterygii</taxon>
        <taxon>Teleostei</taxon>
        <taxon>Ostariophysi</taxon>
        <taxon>Cypriniformes</taxon>
        <taxon>Danionidae</taxon>
        <taxon>Danioninae</taxon>
        <taxon>Danio</taxon>
    </lineage>
</organism>
<reference evidence="5" key="1">
    <citation type="journal article" date="2013" name="Nature">
        <title>The zebrafish reference genome sequence and its relationship to the human genome.</title>
        <authorList>
            <person name="Howe K."/>
            <person name="Clark M.D."/>
            <person name="Torroja C.F."/>
            <person name="Torrance J."/>
            <person name="Berthelot C."/>
            <person name="Muffato M."/>
            <person name="Collins J.E."/>
            <person name="Humphray S."/>
            <person name="McLaren K."/>
            <person name="Matthews L."/>
            <person name="McLaren S."/>
            <person name="Sealy I."/>
            <person name="Caccamo M."/>
            <person name="Churcher C."/>
            <person name="Scott C."/>
            <person name="Barrett J.C."/>
            <person name="Koch R."/>
            <person name="Rauch G.J."/>
            <person name="White S."/>
            <person name="Chow W."/>
            <person name="Kilian B."/>
            <person name="Quintais L.T."/>
            <person name="Guerra-Assuncao J.A."/>
            <person name="Zhou Y."/>
            <person name="Gu Y."/>
            <person name="Yen J."/>
            <person name="Vogel J.H."/>
            <person name="Eyre T."/>
            <person name="Redmond S."/>
            <person name="Banerjee R."/>
            <person name="Chi J."/>
            <person name="Fu B."/>
            <person name="Langley E."/>
            <person name="Maguire S.F."/>
            <person name="Laird G.K."/>
            <person name="Lloyd D."/>
            <person name="Kenyon E."/>
            <person name="Donaldson S."/>
            <person name="Sehra H."/>
            <person name="Almeida-King J."/>
            <person name="Loveland J."/>
            <person name="Trevanion S."/>
            <person name="Jones M."/>
            <person name="Quail M."/>
            <person name="Willey D."/>
            <person name="Hunt A."/>
            <person name="Burton J."/>
            <person name="Sims S."/>
            <person name="McLay K."/>
            <person name="Plumb B."/>
            <person name="Davis J."/>
            <person name="Clee C."/>
            <person name="Oliver K."/>
            <person name="Clark R."/>
            <person name="Riddle C."/>
            <person name="Elliot D."/>
            <person name="Threadgold G."/>
            <person name="Harden G."/>
            <person name="Ware D."/>
            <person name="Begum S."/>
            <person name="Mortimore B."/>
            <person name="Kerry G."/>
            <person name="Heath P."/>
            <person name="Phillimore B."/>
            <person name="Tracey A."/>
            <person name="Corby N."/>
            <person name="Dunn M."/>
            <person name="Johnson C."/>
            <person name="Wood J."/>
            <person name="Clark S."/>
            <person name="Pelan S."/>
            <person name="Griffiths G."/>
            <person name="Smith M."/>
            <person name="Glithero R."/>
            <person name="Howden P."/>
            <person name="Barker N."/>
            <person name="Lloyd C."/>
            <person name="Stevens C."/>
            <person name="Harley J."/>
            <person name="Holt K."/>
            <person name="Panagiotidis G."/>
            <person name="Lovell J."/>
            <person name="Beasley H."/>
            <person name="Henderson C."/>
            <person name="Gordon D."/>
            <person name="Auger K."/>
            <person name="Wright D."/>
            <person name="Collins J."/>
            <person name="Raisen C."/>
            <person name="Dyer L."/>
            <person name="Leung K."/>
            <person name="Robertson L."/>
            <person name="Ambridge K."/>
            <person name="Leongamornlert D."/>
            <person name="McGuire S."/>
            <person name="Gilderthorp R."/>
            <person name="Griffiths C."/>
            <person name="Manthravadi D."/>
            <person name="Nichol S."/>
            <person name="Barker G."/>
            <person name="Whitehead S."/>
            <person name="Kay M."/>
            <person name="Brown J."/>
            <person name="Murnane C."/>
            <person name="Gray E."/>
            <person name="Humphries M."/>
            <person name="Sycamore N."/>
            <person name="Barker D."/>
            <person name="Saunders D."/>
            <person name="Wallis J."/>
            <person name="Babbage A."/>
            <person name="Hammond S."/>
            <person name="Mashreghi-Mohammadi M."/>
            <person name="Barr L."/>
            <person name="Martin S."/>
            <person name="Wray P."/>
            <person name="Ellington A."/>
            <person name="Matthews N."/>
            <person name="Ellwood M."/>
            <person name="Woodmansey R."/>
            <person name="Clark G."/>
            <person name="Cooper J."/>
            <person name="Tromans A."/>
            <person name="Grafham D."/>
            <person name="Skuce C."/>
            <person name="Pandian R."/>
            <person name="Andrews R."/>
            <person name="Harrison E."/>
            <person name="Kimberley A."/>
            <person name="Garnett J."/>
            <person name="Fosker N."/>
            <person name="Hall R."/>
            <person name="Garner P."/>
            <person name="Kelly D."/>
            <person name="Bird C."/>
            <person name="Palmer S."/>
            <person name="Gehring I."/>
            <person name="Berger A."/>
            <person name="Dooley C.M."/>
            <person name="Ersan-Urun Z."/>
            <person name="Eser C."/>
            <person name="Geiger H."/>
            <person name="Geisler M."/>
            <person name="Karotki L."/>
            <person name="Kirn A."/>
            <person name="Konantz J."/>
            <person name="Konantz M."/>
            <person name="Oberlander M."/>
            <person name="Rudolph-Geiger S."/>
            <person name="Teucke M."/>
            <person name="Lanz C."/>
            <person name="Raddatz G."/>
            <person name="Osoegawa K."/>
            <person name="Zhu B."/>
            <person name="Rapp A."/>
            <person name="Widaa S."/>
            <person name="Langford C."/>
            <person name="Yang F."/>
            <person name="Schuster S.C."/>
            <person name="Carter N.P."/>
            <person name="Harrow J."/>
            <person name="Ning Z."/>
            <person name="Herrero J."/>
            <person name="Searle S.M."/>
            <person name="Enright A."/>
            <person name="Geisler R."/>
            <person name="Plasterk R.H."/>
            <person name="Lee C."/>
            <person name="Westerfield M."/>
            <person name="de Jong P.J."/>
            <person name="Zon L.I."/>
            <person name="Postlethwait J.H."/>
            <person name="Nusslein-Volhard C."/>
            <person name="Hubbard T.J."/>
            <person name="Roest Crollius H."/>
            <person name="Rogers J."/>
            <person name="Stemple D.L."/>
        </authorList>
    </citation>
    <scope>NUCLEOTIDE SEQUENCE [LARGE SCALE GENOMIC DNA]</scope>
    <source>
        <strain evidence="5">Tuebingen</strain>
    </source>
</reference>
<reference evidence="4" key="2">
    <citation type="journal article" date="2007" name="Biochemistry">
        <title>Specificity of zebrafish retinol saturase: formation of all-trans-13,14-dihydroretinol and all-trans-7,8-dihydroretinol.</title>
        <authorList>
            <person name="Moise A.R."/>
            <person name="Isken A."/>
            <person name="Dominguez M."/>
            <person name="de Lera A.R."/>
            <person name="von Lintig J."/>
            <person name="Palczewski K."/>
        </authorList>
    </citation>
    <scope>LACK OF CATALYTIC ACTIVITY</scope>
    <scope>DEVELOPMENTAL STAGE</scope>
</reference>